<name>DBB2_DOLAU</name>
<sequence length="33" mass="3872">SHQDCYEALHKCMASHSKPFSCSMKFHMCLQQQ</sequence>
<keyword id="KW-0044">Antibiotic</keyword>
<keyword id="KW-0929">Antimicrobial</keyword>
<keyword id="KW-0903">Direct protein sequencing</keyword>
<keyword id="KW-1015">Disulfide bond</keyword>
<keyword id="KW-0295">Fungicide</keyword>
<keyword id="KW-0964">Secreted</keyword>
<accession>P83376</accession>
<organism evidence="2">
    <name type="scientific">Dolabella auricularia</name>
    <name type="common">Shoulderblade sea cat</name>
    <dbReference type="NCBI Taxonomy" id="6511"/>
    <lineage>
        <taxon>Eukaryota</taxon>
        <taxon>Metazoa</taxon>
        <taxon>Spiralia</taxon>
        <taxon>Lophotrochozoa</taxon>
        <taxon>Mollusca</taxon>
        <taxon>Gastropoda</taxon>
        <taxon>Heterobranchia</taxon>
        <taxon>Euthyneura</taxon>
        <taxon>Tectipleura</taxon>
        <taxon>Aplysiida</taxon>
        <taxon>Aplysioidea</taxon>
        <taxon>Aplysiidae</taxon>
        <taxon>Dolabella</taxon>
    </lineage>
</organism>
<proteinExistence type="evidence at protein level"/>
<dbReference type="GO" id="GO:0005576">
    <property type="term" value="C:extracellular region"/>
    <property type="evidence" value="ECO:0007669"/>
    <property type="project" value="UniProtKB-SubCell"/>
</dbReference>
<dbReference type="GO" id="GO:0042742">
    <property type="term" value="P:defense response to bacterium"/>
    <property type="evidence" value="ECO:0007669"/>
    <property type="project" value="UniProtKB-KW"/>
</dbReference>
<dbReference type="GO" id="GO:0050832">
    <property type="term" value="P:defense response to fungus"/>
    <property type="evidence" value="ECO:0007669"/>
    <property type="project" value="UniProtKB-KW"/>
</dbReference>
<dbReference type="GO" id="GO:0031640">
    <property type="term" value="P:killing of cells of another organism"/>
    <property type="evidence" value="ECO:0007669"/>
    <property type="project" value="UniProtKB-KW"/>
</dbReference>
<reference key="1">
    <citation type="journal article" date="2003" name="Dev. Comp. Immunol.">
        <title>A novel antimicrobial peptide from the sea hare Dolabella auricularia.</title>
        <authorList>
            <person name="Iijima R."/>
            <person name="Kisugi J."/>
            <person name="Yamazaki M."/>
        </authorList>
    </citation>
    <scope>PROTEIN SEQUENCE</scope>
    <scope>FUNCTION</scope>
    <scope>MASS SPECTROMETRY</scope>
    <source>
        <tissue>Body wall</tissue>
    </source>
</reference>
<evidence type="ECO:0000269" key="1">
    <source>
    </source>
</evidence>
<evidence type="ECO:0000305" key="2"/>
<feature type="peptide" id="PRO_0000044772" description="Dolabellanin-B2">
    <location>
        <begin position="1"/>
        <end position="33"/>
    </location>
</feature>
<comment type="function">
    <text evidence="1">Has antibacterial activity against Gram-negative bacteria E.coli JM109 and DH5-alpha, H.influenza IID 983, and V.vulnificus RIMD 2219009. Has antibacterial activity against Gram-positive bacteria S.aureus IID 1677, B.subtilis RIMD 0225014 and L.monocytogenes VIU206. Possesses antifungal activity against S.cerevisiae A581A, S.pombe IFO 1628, C.albicans ATCC 36232 and TIMM-1623, and C.tropicalis TIMM-0313.</text>
</comment>
<comment type="subcellular location">
    <subcellularLocation>
        <location>Secreted</location>
    </subcellularLocation>
</comment>
<comment type="PTM">
    <text>Contains two disulfide bonds.</text>
</comment>
<comment type="PTM">
    <text>Up to two of the methionines may be oxidized to methionine sulfoxides.</text>
</comment>
<comment type="mass spectrometry" mass="3865.4" method="MALDI" evidence="1">
    <text>Without methionine sulfoxide.</text>
</comment>
<comment type="mass spectrometry" mass="3883.5" method="MALDI" evidence="1">
    <text>With 1 methionine sulfoxide.</text>
</comment>
<comment type="mass spectrometry" mass="3899.6" method="MALDI" evidence="1">
    <text>With 2 methionine sulfoxides.</text>
</comment>
<protein>
    <recommendedName>
        <fullName>Dolabellanin-B2</fullName>
    </recommendedName>
</protein>